<accession>Q9FKV1</accession>
<protein>
    <recommendedName>
        <fullName>Probable anion transporter 5</fullName>
    </recommendedName>
    <alternativeName>
        <fullName>Phosphate transporter PHT4;6</fullName>
    </alternativeName>
</protein>
<dbReference type="EMBL" id="AB011475">
    <property type="protein sequence ID" value="BAB10122.1"/>
    <property type="molecule type" value="Genomic_DNA"/>
</dbReference>
<dbReference type="EMBL" id="CP002688">
    <property type="protein sequence ID" value="AED95102.1"/>
    <property type="molecule type" value="Genomic_DNA"/>
</dbReference>
<dbReference type="EMBL" id="BT002878">
    <property type="protein sequence ID" value="AAO22695.1"/>
    <property type="molecule type" value="mRNA"/>
</dbReference>
<dbReference type="RefSeq" id="NP_199250.1">
    <property type="nucleotide sequence ID" value="NM_123804.4"/>
</dbReference>
<dbReference type="SMR" id="Q9FKV1"/>
<dbReference type="FunCoup" id="Q9FKV1">
    <property type="interactions" value="212"/>
</dbReference>
<dbReference type="STRING" id="3702.Q9FKV1"/>
<dbReference type="PaxDb" id="3702-AT5G44370.1"/>
<dbReference type="ProteomicsDB" id="240879"/>
<dbReference type="EnsemblPlants" id="AT5G44370.1">
    <property type="protein sequence ID" value="AT5G44370.1"/>
    <property type="gene ID" value="AT5G44370"/>
</dbReference>
<dbReference type="GeneID" id="834463"/>
<dbReference type="Gramene" id="AT5G44370.1">
    <property type="protein sequence ID" value="AT5G44370.1"/>
    <property type="gene ID" value="AT5G44370"/>
</dbReference>
<dbReference type="KEGG" id="ath:AT5G44370"/>
<dbReference type="Araport" id="AT5G44370"/>
<dbReference type="TAIR" id="AT5G44370">
    <property type="gene designation" value="PHT4"/>
</dbReference>
<dbReference type="eggNOG" id="KOG2532">
    <property type="taxonomic scope" value="Eukaryota"/>
</dbReference>
<dbReference type="HOGENOM" id="CLU_001265_5_11_1"/>
<dbReference type="InParanoid" id="Q9FKV1"/>
<dbReference type="OMA" id="LITFWMP"/>
<dbReference type="OrthoDB" id="2985014at2759"/>
<dbReference type="PhylomeDB" id="Q9FKV1"/>
<dbReference type="PRO" id="PR:Q9FKV1"/>
<dbReference type="Proteomes" id="UP000006548">
    <property type="component" value="Chromosome 5"/>
</dbReference>
<dbReference type="ExpressionAtlas" id="Q9FKV1">
    <property type="expression patterns" value="baseline and differential"/>
</dbReference>
<dbReference type="GO" id="GO:0005794">
    <property type="term" value="C:Golgi apparatus"/>
    <property type="evidence" value="ECO:0000314"/>
    <property type="project" value="TAIR"/>
</dbReference>
<dbReference type="GO" id="GO:0000139">
    <property type="term" value="C:Golgi membrane"/>
    <property type="evidence" value="ECO:0007669"/>
    <property type="project" value="UniProtKB-SubCell"/>
</dbReference>
<dbReference type="GO" id="GO:0005315">
    <property type="term" value="F:phosphate transmembrane transporter activity"/>
    <property type="evidence" value="ECO:0000314"/>
    <property type="project" value="TAIR"/>
</dbReference>
<dbReference type="GO" id="GO:0009624">
    <property type="term" value="P:response to nematode"/>
    <property type="evidence" value="ECO:0007007"/>
    <property type="project" value="TAIR"/>
</dbReference>
<dbReference type="CDD" id="cd17380">
    <property type="entry name" value="MFS_SLC17A9_like"/>
    <property type="match status" value="1"/>
</dbReference>
<dbReference type="FunFam" id="1.20.1250.20:FF:000199">
    <property type="entry name" value="Probable anion transporter 7"/>
    <property type="match status" value="1"/>
</dbReference>
<dbReference type="FunFam" id="1.20.1250.20:FF:000220">
    <property type="entry name" value="Probable anion transporter 7"/>
    <property type="match status" value="1"/>
</dbReference>
<dbReference type="Gene3D" id="1.20.1250.20">
    <property type="entry name" value="MFS general substrate transporter like domains"/>
    <property type="match status" value="2"/>
</dbReference>
<dbReference type="InterPro" id="IPR011701">
    <property type="entry name" value="MFS"/>
</dbReference>
<dbReference type="InterPro" id="IPR020846">
    <property type="entry name" value="MFS_dom"/>
</dbReference>
<dbReference type="InterPro" id="IPR050382">
    <property type="entry name" value="MFS_Na/Anion_cotransporter"/>
</dbReference>
<dbReference type="InterPro" id="IPR036259">
    <property type="entry name" value="MFS_trans_sf"/>
</dbReference>
<dbReference type="InterPro" id="IPR044777">
    <property type="entry name" value="SLC17A9-like"/>
</dbReference>
<dbReference type="PANTHER" id="PTHR11662:SF282">
    <property type="entry name" value="ANION TRANSPORTER 5-RELATED"/>
    <property type="match status" value="1"/>
</dbReference>
<dbReference type="PANTHER" id="PTHR11662">
    <property type="entry name" value="SOLUTE CARRIER FAMILY 17"/>
    <property type="match status" value="1"/>
</dbReference>
<dbReference type="Pfam" id="PF07690">
    <property type="entry name" value="MFS_1"/>
    <property type="match status" value="1"/>
</dbReference>
<dbReference type="SUPFAM" id="SSF103473">
    <property type="entry name" value="MFS general substrate transporter"/>
    <property type="match status" value="1"/>
</dbReference>
<dbReference type="PROSITE" id="PS50850">
    <property type="entry name" value="MFS"/>
    <property type="match status" value="1"/>
</dbReference>
<gene>
    <name type="primary">ANTR5</name>
    <name type="synonym">PHT4;6</name>
    <name type="ordered locus">At5g44370</name>
    <name type="ORF">K9L2.16</name>
</gene>
<name>ANTR5_ARATH</name>
<keyword id="KW-0333">Golgi apparatus</keyword>
<keyword id="KW-0472">Membrane</keyword>
<keyword id="KW-1185">Reference proteome</keyword>
<keyword id="KW-0732">Signal</keyword>
<keyword id="KW-0812">Transmembrane</keyword>
<keyword id="KW-1133">Transmembrane helix</keyword>
<feature type="signal peptide" evidence="1">
    <location>
        <begin position="1"/>
        <end position="23"/>
    </location>
</feature>
<feature type="chain" id="PRO_0000331538" description="Probable anion transporter 5">
    <location>
        <begin position="24"/>
        <end position="432"/>
    </location>
</feature>
<feature type="transmembrane region" description="Helical" evidence="1">
    <location>
        <begin position="50"/>
        <end position="70"/>
    </location>
</feature>
<feature type="transmembrane region" description="Helical" evidence="1">
    <location>
        <begin position="78"/>
        <end position="98"/>
    </location>
</feature>
<feature type="transmembrane region" description="Helical" evidence="1">
    <location>
        <begin position="101"/>
        <end position="121"/>
    </location>
</feature>
<feature type="transmembrane region" description="Helical" evidence="1">
    <location>
        <begin position="140"/>
        <end position="160"/>
    </location>
</feature>
<feature type="transmembrane region" description="Helical" evidence="1">
    <location>
        <begin position="164"/>
        <end position="184"/>
    </location>
</feature>
<feature type="transmembrane region" description="Helical" evidence="1">
    <location>
        <begin position="229"/>
        <end position="249"/>
    </location>
</feature>
<feature type="transmembrane region" description="Helical" evidence="1">
    <location>
        <begin position="273"/>
        <end position="293"/>
    </location>
</feature>
<feature type="transmembrane region" description="Helical" evidence="1">
    <location>
        <begin position="305"/>
        <end position="325"/>
    </location>
</feature>
<feature type="transmembrane region" description="Helical" evidence="1">
    <location>
        <begin position="331"/>
        <end position="351"/>
    </location>
</feature>
<feature type="transmembrane region" description="Helical" evidence="1">
    <location>
        <begin position="360"/>
        <end position="380"/>
    </location>
</feature>
<feature type="transmembrane region" description="Helical" evidence="1">
    <location>
        <begin position="405"/>
        <end position="425"/>
    </location>
</feature>
<comment type="function">
    <text evidence="2">Inorganic phosphate and probable anion transporter.</text>
</comment>
<comment type="subcellular location">
    <subcellularLocation>
        <location evidence="2">Golgi apparatus membrane</location>
        <topology evidence="2">Multi-pass membrane protein</topology>
    </subcellularLocation>
</comment>
<comment type="tissue specificity">
    <text evidence="2 3">Ubiquitous.</text>
</comment>
<comment type="similarity">
    <text evidence="4">Belongs to the major facilitator superfamily. Sodium/anion cotransporter (TC 2.A.1.14) family.</text>
</comment>
<proteinExistence type="evidence at transcript level"/>
<organism>
    <name type="scientific">Arabidopsis thaliana</name>
    <name type="common">Mouse-ear cress</name>
    <dbReference type="NCBI Taxonomy" id="3702"/>
    <lineage>
        <taxon>Eukaryota</taxon>
        <taxon>Viridiplantae</taxon>
        <taxon>Streptophyta</taxon>
        <taxon>Embryophyta</taxon>
        <taxon>Tracheophyta</taxon>
        <taxon>Spermatophyta</taxon>
        <taxon>Magnoliopsida</taxon>
        <taxon>eudicotyledons</taxon>
        <taxon>Gunneridae</taxon>
        <taxon>Pentapetalae</taxon>
        <taxon>rosids</taxon>
        <taxon>malvids</taxon>
        <taxon>Brassicales</taxon>
        <taxon>Brassicaceae</taxon>
        <taxon>Camelineae</taxon>
        <taxon>Arabidopsis</taxon>
    </lineage>
</organism>
<reference key="1">
    <citation type="journal article" date="1998" name="DNA Res.">
        <title>Structural analysis of Arabidopsis thaliana chromosome 5. V. Sequence features of the regions of 1,381,565 bp covered by twenty one physically assigned P1 and TAC clones.</title>
        <authorList>
            <person name="Kaneko T."/>
            <person name="Kotani H."/>
            <person name="Nakamura Y."/>
            <person name="Sato S."/>
            <person name="Asamizu E."/>
            <person name="Miyajima N."/>
            <person name="Tabata S."/>
        </authorList>
    </citation>
    <scope>NUCLEOTIDE SEQUENCE [LARGE SCALE GENOMIC DNA]</scope>
    <source>
        <strain>cv. Columbia</strain>
    </source>
</reference>
<reference key="2">
    <citation type="journal article" date="2017" name="Plant J.">
        <title>Araport11: a complete reannotation of the Arabidopsis thaliana reference genome.</title>
        <authorList>
            <person name="Cheng C.Y."/>
            <person name="Krishnakumar V."/>
            <person name="Chan A.P."/>
            <person name="Thibaud-Nissen F."/>
            <person name="Schobel S."/>
            <person name="Town C.D."/>
        </authorList>
    </citation>
    <scope>GENOME REANNOTATION</scope>
    <source>
        <strain>cv. Columbia</strain>
    </source>
</reference>
<reference key="3">
    <citation type="journal article" date="2003" name="Science">
        <title>Empirical analysis of transcriptional activity in the Arabidopsis genome.</title>
        <authorList>
            <person name="Yamada K."/>
            <person name="Lim J."/>
            <person name="Dale J.M."/>
            <person name="Chen H."/>
            <person name="Shinn P."/>
            <person name="Palm C.J."/>
            <person name="Southwick A.M."/>
            <person name="Wu H.C."/>
            <person name="Kim C.J."/>
            <person name="Nguyen M."/>
            <person name="Pham P.K."/>
            <person name="Cheuk R.F."/>
            <person name="Karlin-Newmann G."/>
            <person name="Liu S.X."/>
            <person name="Lam B."/>
            <person name="Sakano H."/>
            <person name="Wu T."/>
            <person name="Yu G."/>
            <person name="Miranda M."/>
            <person name="Quach H.L."/>
            <person name="Tripp M."/>
            <person name="Chang C.H."/>
            <person name="Lee J.M."/>
            <person name="Toriumi M.J."/>
            <person name="Chan M.M."/>
            <person name="Tang C.C."/>
            <person name="Onodera C.S."/>
            <person name="Deng J.M."/>
            <person name="Akiyama K."/>
            <person name="Ansari Y."/>
            <person name="Arakawa T."/>
            <person name="Banh J."/>
            <person name="Banno F."/>
            <person name="Bowser L."/>
            <person name="Brooks S.Y."/>
            <person name="Carninci P."/>
            <person name="Chao Q."/>
            <person name="Choy N."/>
            <person name="Enju A."/>
            <person name="Goldsmith A.D."/>
            <person name="Gurjal M."/>
            <person name="Hansen N.F."/>
            <person name="Hayashizaki Y."/>
            <person name="Johnson-Hopson C."/>
            <person name="Hsuan V.W."/>
            <person name="Iida K."/>
            <person name="Karnes M."/>
            <person name="Khan S."/>
            <person name="Koesema E."/>
            <person name="Ishida J."/>
            <person name="Jiang P.X."/>
            <person name="Jones T."/>
            <person name="Kawai J."/>
            <person name="Kamiya A."/>
            <person name="Meyers C."/>
            <person name="Nakajima M."/>
            <person name="Narusaka M."/>
            <person name="Seki M."/>
            <person name="Sakurai T."/>
            <person name="Satou M."/>
            <person name="Tamse R."/>
            <person name="Vaysberg M."/>
            <person name="Wallender E.K."/>
            <person name="Wong C."/>
            <person name="Yamamura Y."/>
            <person name="Yuan S."/>
            <person name="Shinozaki K."/>
            <person name="Davis R.W."/>
            <person name="Theologis A."/>
            <person name="Ecker J.R."/>
        </authorList>
    </citation>
    <scope>NUCLEOTIDE SEQUENCE [LARGE SCALE MRNA]</scope>
    <source>
        <strain>cv. Columbia</strain>
    </source>
</reference>
<reference key="4">
    <citation type="journal article" date="2004" name="Planta">
        <title>Characterization of a protein of the plastid inner envelope having homology to animal inorganic phosphate, chloride and organic-anion transporters.</title>
        <authorList>
            <person name="Roth C."/>
            <person name="Menzel G."/>
            <person name="Petetot J.M."/>
            <person name="Rochat-Hacker S."/>
            <person name="Poirier Y."/>
        </authorList>
    </citation>
    <scope>GENE FAMILY</scope>
    <scope>NOMENCLATURE</scope>
</reference>
<reference key="5">
    <citation type="journal article" date="2008" name="New Phytol.">
        <title>Functional analysis of the Arabidopsis PHT4 family of intracellular phosphate transporters.</title>
        <authorList>
            <person name="Guo B."/>
            <person name="Jin Y."/>
            <person name="Wussler C."/>
            <person name="Blancaflor E.B."/>
            <person name="Motes C.M."/>
            <person name="Versaw W.K."/>
        </authorList>
    </citation>
    <scope>FUNCTION</scope>
    <scope>TISSUE SPECIFICITY</scope>
    <scope>SUBCELLULAR LOCATION</scope>
</reference>
<reference key="6">
    <citation type="journal article" date="2008" name="Plant Signal. Behav.">
        <title>Differential expression and phylogenetic analysis suggest specialization of plastid-localized members of the PHT4 phosphate transporter family for photosynthetic and heterotrophic tissues.</title>
        <authorList>
            <person name="Guo B."/>
            <person name="Irigoyen S."/>
            <person name="Fowler T.B."/>
            <person name="Versaw W.K."/>
        </authorList>
    </citation>
    <scope>TISSUE SPECIFICITY</scope>
</reference>
<evidence type="ECO:0000255" key="1"/>
<evidence type="ECO:0000269" key="2">
    <source>
    </source>
</evidence>
<evidence type="ECO:0000269" key="3">
    <source>
    </source>
</evidence>
<evidence type="ECO:0000305" key="4"/>
<sequence>MKLSNIPQRYVIVFLTFLSTCVCYIERVGFSIAYTVAADAAGINQSSKGTILSTFFVGYACSQVPGGWAAQKIGGRKVLLLSFVLWSSTCFLVPLDPNRVGLLVVARLLVGVAQGFIFPSIHTVLAQWVPPHERSRLVSITTSGMYLGAALGMWLLPALVELRGPESVFLAEALAGVIWSLLWIRYATDPPRSEHPKAAAAGFGGALLPTNVNHHKVTHIPWKKIMLSLPVWAIVVNNFTFHYALYVLMNWLPTYFELGLQISLQGMDSSKMVPYLNMFVFSIVGGFIADYLITKRILSVTRTRKFLNTVGFLIASAALMVLPMFRTENGVILCSSVALGFLALGRAGFAVNHMDIAPRYAGIVMGVSNTAGTLAGIIGVDLTGKLLEASKLVYSDLSHPESWRVVFFIPGLLCIFSSVVFLLFSTGERIFD</sequence>